<organism>
    <name type="scientific">Mytilus chilensis</name>
    <name type="common">Chilean blue mussel</name>
    <dbReference type="NCBI Taxonomy" id="173667"/>
    <lineage>
        <taxon>Eukaryota</taxon>
        <taxon>Metazoa</taxon>
        <taxon>Spiralia</taxon>
        <taxon>Lophotrochozoa</taxon>
        <taxon>Mollusca</taxon>
        <taxon>Bivalvia</taxon>
        <taxon>Autobranchia</taxon>
        <taxon>Pteriomorphia</taxon>
        <taxon>Mytilida</taxon>
        <taxon>Mytiloidea</taxon>
        <taxon>Mytilidae</taxon>
        <taxon>Mytilinae</taxon>
        <taxon>Mytilus</taxon>
    </lineage>
</organism>
<dbReference type="EMBL" id="AY267751">
    <property type="protein sequence ID" value="AAP94670.1"/>
    <property type="molecule type" value="Genomic_DNA"/>
</dbReference>
<dbReference type="SMR" id="Q6WV74"/>
<dbReference type="GO" id="GO:0000786">
    <property type="term" value="C:nucleosome"/>
    <property type="evidence" value="ECO:0007669"/>
    <property type="project" value="UniProtKB-KW"/>
</dbReference>
<dbReference type="GO" id="GO:0005634">
    <property type="term" value="C:nucleus"/>
    <property type="evidence" value="ECO:0007669"/>
    <property type="project" value="UniProtKB-SubCell"/>
</dbReference>
<dbReference type="GO" id="GO:0003677">
    <property type="term" value="F:DNA binding"/>
    <property type="evidence" value="ECO:0007669"/>
    <property type="project" value="UniProtKB-KW"/>
</dbReference>
<dbReference type="GO" id="GO:0046982">
    <property type="term" value="F:protein heterodimerization activity"/>
    <property type="evidence" value="ECO:0007669"/>
    <property type="project" value="InterPro"/>
</dbReference>
<dbReference type="GO" id="GO:0030527">
    <property type="term" value="F:structural constituent of chromatin"/>
    <property type="evidence" value="ECO:0007669"/>
    <property type="project" value="InterPro"/>
</dbReference>
<dbReference type="CDD" id="cd22912">
    <property type="entry name" value="HFD_H4"/>
    <property type="match status" value="1"/>
</dbReference>
<dbReference type="FunFam" id="1.10.20.10:FF:000002">
    <property type="entry name" value="Histone H4"/>
    <property type="match status" value="1"/>
</dbReference>
<dbReference type="Gene3D" id="1.10.20.10">
    <property type="entry name" value="Histone, subunit A"/>
    <property type="match status" value="1"/>
</dbReference>
<dbReference type="InterPro" id="IPR035425">
    <property type="entry name" value="CENP-T/H4_C"/>
</dbReference>
<dbReference type="InterPro" id="IPR009072">
    <property type="entry name" value="Histone-fold"/>
</dbReference>
<dbReference type="InterPro" id="IPR001951">
    <property type="entry name" value="Histone_H4"/>
</dbReference>
<dbReference type="InterPro" id="IPR019809">
    <property type="entry name" value="Histone_H4_CS"/>
</dbReference>
<dbReference type="InterPro" id="IPR004823">
    <property type="entry name" value="TAF_TATA-bd_Histone-like_dom"/>
</dbReference>
<dbReference type="PANTHER" id="PTHR10484">
    <property type="entry name" value="HISTONE H4"/>
    <property type="match status" value="1"/>
</dbReference>
<dbReference type="Pfam" id="PF15511">
    <property type="entry name" value="CENP-T_C"/>
    <property type="match status" value="1"/>
</dbReference>
<dbReference type="PRINTS" id="PR00623">
    <property type="entry name" value="HISTONEH4"/>
</dbReference>
<dbReference type="SMART" id="SM00417">
    <property type="entry name" value="H4"/>
    <property type="match status" value="1"/>
</dbReference>
<dbReference type="SMART" id="SM00803">
    <property type="entry name" value="TAF"/>
    <property type="match status" value="1"/>
</dbReference>
<dbReference type="SUPFAM" id="SSF47113">
    <property type="entry name" value="Histone-fold"/>
    <property type="match status" value="1"/>
</dbReference>
<dbReference type="PROSITE" id="PS00047">
    <property type="entry name" value="HISTONE_H4"/>
    <property type="match status" value="1"/>
</dbReference>
<accession>Q6WV74</accession>
<sequence length="103" mass="11395">MSGRGKGGKGLGKGGAKRHRRVLRDNIQGITKPAIRRLARRGGVKRISGLIYEETRGVLKVFLENVIRDAVTYTEHAKRKTVTAMDVVYALKRQGRTLYGFGG</sequence>
<comment type="function">
    <text>Core component of nucleosome. Nucleosomes wrap and compact DNA into chromatin, limiting DNA accessibility to the cellular machineries which require DNA as a template. Histones thereby play a central role in transcription regulation, DNA repair, DNA replication and chromosomal stability. DNA accessibility is regulated via a complex set of post-translational modifications of histones, also called histone code, and nucleosome remodeling.</text>
</comment>
<comment type="subunit">
    <text>The nucleosome is a histone octamer containing two molecules each of H2A, H2B, H3 and H4 assembled in one H3-H4 heterotetramer and two H2A-H2B heterodimers. The octamer wraps approximately 147 bp of DNA.</text>
</comment>
<comment type="subcellular location">
    <subcellularLocation>
        <location evidence="1">Nucleus</location>
    </subcellularLocation>
    <subcellularLocation>
        <location evidence="1">Chromosome</location>
    </subcellularLocation>
</comment>
<comment type="similarity">
    <text evidence="4">Belongs to the histone H4 family.</text>
</comment>
<evidence type="ECO:0000250" key="1"/>
<evidence type="ECO:0000250" key="2">
    <source>
        <dbReference type="UniProtKB" id="P62805"/>
    </source>
</evidence>
<evidence type="ECO:0000256" key="3">
    <source>
        <dbReference type="SAM" id="MobiDB-lite"/>
    </source>
</evidence>
<evidence type="ECO:0000305" key="4"/>
<proteinExistence type="inferred from homology"/>
<feature type="initiator methionine" description="Removed" evidence="1">
    <location>
        <position position="1"/>
    </location>
</feature>
<feature type="chain" id="PRO_0000158332" description="Histone H4">
    <location>
        <begin position="2"/>
        <end position="103"/>
    </location>
</feature>
<feature type="DNA-binding region">
    <location>
        <begin position="17"/>
        <end position="21"/>
    </location>
</feature>
<feature type="region of interest" description="Disordered" evidence="3">
    <location>
        <begin position="1"/>
        <end position="20"/>
    </location>
</feature>
<feature type="compositionally biased region" description="Gly residues" evidence="3">
    <location>
        <begin position="1"/>
        <end position="14"/>
    </location>
</feature>
<feature type="modified residue" description="N-acetylserine" evidence="1">
    <location>
        <position position="2"/>
    </location>
</feature>
<feature type="modified residue" description="N6-acetyl-N6-methyllysine; alternate" evidence="2">
    <location>
        <position position="6"/>
    </location>
</feature>
<feature type="modified residue" description="N6-acetyl-N6-methyllysine; alternate" evidence="2">
    <location>
        <position position="13"/>
    </location>
</feature>
<feature type="modified residue" description="N6-acetyllysine" evidence="1">
    <location>
        <position position="17"/>
    </location>
</feature>
<name>H4_MYTCH</name>
<keyword id="KW-0007">Acetylation</keyword>
<keyword id="KW-0158">Chromosome</keyword>
<keyword id="KW-0238">DNA-binding</keyword>
<keyword id="KW-0488">Methylation</keyword>
<keyword id="KW-0544">Nucleosome core</keyword>
<keyword id="KW-0539">Nucleus</keyword>
<reference key="1">
    <citation type="journal article" date="2004" name="J. Mol. Evol.">
        <title>Molecular evolutionary characterization of the mussel Mytilus histone multigene family: first record of a tandemly repeated unit of five histone genes containing an H1 subtype with 'orphon' features.</title>
        <authorList>
            <person name="Eirin-Lopez J.M."/>
            <person name="Ruiz F."/>
            <person name="Gonzalez-Tizon A.M."/>
            <person name="Martinez A."/>
            <person name="Sanchez L."/>
            <person name="Mendez J."/>
        </authorList>
    </citation>
    <scope>NUCLEOTIDE SEQUENCE [GENOMIC DNA]</scope>
</reference>
<protein>
    <recommendedName>
        <fullName>Histone H4</fullName>
    </recommendedName>
</protein>